<proteinExistence type="inferred from homology"/>
<keyword id="KW-1185">Reference proteome</keyword>
<keyword id="KW-0687">Ribonucleoprotein</keyword>
<keyword id="KW-0689">Ribosomal protein</keyword>
<keyword id="KW-0694">RNA-binding</keyword>
<keyword id="KW-0699">rRNA-binding</keyword>
<reference key="1">
    <citation type="submission" date="2003-06" db="EMBL/GenBank/DDBJ databases">
        <title>The complete genome sequence of Haemophilus ducreyi.</title>
        <authorList>
            <person name="Munson R.S. Jr."/>
            <person name="Ray W.C."/>
            <person name="Mahairas G."/>
            <person name="Sabo P."/>
            <person name="Mungur R."/>
            <person name="Johnson L."/>
            <person name="Nguyen D."/>
            <person name="Wang J."/>
            <person name="Forst C."/>
            <person name="Hood L."/>
        </authorList>
    </citation>
    <scope>NUCLEOTIDE SEQUENCE [LARGE SCALE GENOMIC DNA]</scope>
    <source>
        <strain>35000HP / ATCC 700724</strain>
    </source>
</reference>
<sequence>MAKQSMIARDVKRAKLADKFYAKREELKKIIYDINSSDEDRWAAVLKLQMLPRDSSPSRQRSRCRQTGRPHGVLSKFGLSRIKVREAAMRGEIPGLKKASW</sequence>
<feature type="chain" id="PRO_1000128414" description="Small ribosomal subunit protein uS14">
    <location>
        <begin position="1"/>
        <end position="101"/>
    </location>
</feature>
<accession>Q7VKE6</accession>
<protein>
    <recommendedName>
        <fullName evidence="1">Small ribosomal subunit protein uS14</fullName>
    </recommendedName>
    <alternativeName>
        <fullName evidence="2">30S ribosomal protein S14</fullName>
    </alternativeName>
</protein>
<organism>
    <name type="scientific">Haemophilus ducreyi (strain 35000HP / ATCC 700724)</name>
    <dbReference type="NCBI Taxonomy" id="233412"/>
    <lineage>
        <taxon>Bacteria</taxon>
        <taxon>Pseudomonadati</taxon>
        <taxon>Pseudomonadota</taxon>
        <taxon>Gammaproteobacteria</taxon>
        <taxon>Pasteurellales</taxon>
        <taxon>Pasteurellaceae</taxon>
        <taxon>Haemophilus</taxon>
    </lineage>
</organism>
<gene>
    <name evidence="1" type="primary">rpsN</name>
    <name type="ordered locus">HD_1965</name>
</gene>
<comment type="function">
    <text evidence="1">Binds 16S rRNA, required for the assembly of 30S particles and may also be responsible for determining the conformation of the 16S rRNA at the A site.</text>
</comment>
<comment type="subunit">
    <text evidence="1">Part of the 30S ribosomal subunit. Contacts proteins S3 and S10.</text>
</comment>
<comment type="similarity">
    <text evidence="1">Belongs to the universal ribosomal protein uS14 family.</text>
</comment>
<evidence type="ECO:0000255" key="1">
    <source>
        <dbReference type="HAMAP-Rule" id="MF_00537"/>
    </source>
</evidence>
<evidence type="ECO:0000305" key="2"/>
<name>RS14_HAEDU</name>
<dbReference type="EMBL" id="AE017143">
    <property type="protein sequence ID" value="AAP96683.1"/>
    <property type="molecule type" value="Genomic_DNA"/>
</dbReference>
<dbReference type="RefSeq" id="WP_010945709.1">
    <property type="nucleotide sequence ID" value="NC_002940.2"/>
</dbReference>
<dbReference type="SMR" id="Q7VKE6"/>
<dbReference type="STRING" id="233412.HD_1965"/>
<dbReference type="KEGG" id="hdu:HD_1965"/>
<dbReference type="eggNOG" id="COG0199">
    <property type="taxonomic scope" value="Bacteria"/>
</dbReference>
<dbReference type="HOGENOM" id="CLU_139869_0_1_6"/>
<dbReference type="OrthoDB" id="9810484at2"/>
<dbReference type="Proteomes" id="UP000001022">
    <property type="component" value="Chromosome"/>
</dbReference>
<dbReference type="GO" id="GO:0005737">
    <property type="term" value="C:cytoplasm"/>
    <property type="evidence" value="ECO:0007669"/>
    <property type="project" value="UniProtKB-ARBA"/>
</dbReference>
<dbReference type="GO" id="GO:0015935">
    <property type="term" value="C:small ribosomal subunit"/>
    <property type="evidence" value="ECO:0007669"/>
    <property type="project" value="TreeGrafter"/>
</dbReference>
<dbReference type="GO" id="GO:0019843">
    <property type="term" value="F:rRNA binding"/>
    <property type="evidence" value="ECO:0007669"/>
    <property type="project" value="UniProtKB-UniRule"/>
</dbReference>
<dbReference type="GO" id="GO:0003735">
    <property type="term" value="F:structural constituent of ribosome"/>
    <property type="evidence" value="ECO:0007669"/>
    <property type="project" value="InterPro"/>
</dbReference>
<dbReference type="GO" id="GO:0006412">
    <property type="term" value="P:translation"/>
    <property type="evidence" value="ECO:0007669"/>
    <property type="project" value="UniProtKB-UniRule"/>
</dbReference>
<dbReference type="FunFam" id="1.10.287.1480:FF:000001">
    <property type="entry name" value="30S ribosomal protein S14"/>
    <property type="match status" value="1"/>
</dbReference>
<dbReference type="Gene3D" id="1.10.287.1480">
    <property type="match status" value="1"/>
</dbReference>
<dbReference type="HAMAP" id="MF_00537">
    <property type="entry name" value="Ribosomal_uS14_1"/>
    <property type="match status" value="1"/>
</dbReference>
<dbReference type="InterPro" id="IPR001209">
    <property type="entry name" value="Ribosomal_uS14"/>
</dbReference>
<dbReference type="InterPro" id="IPR023036">
    <property type="entry name" value="Ribosomal_uS14_bac/plastid"/>
</dbReference>
<dbReference type="InterPro" id="IPR018271">
    <property type="entry name" value="Ribosomal_uS14_CS"/>
</dbReference>
<dbReference type="NCBIfam" id="NF006477">
    <property type="entry name" value="PRK08881.1"/>
    <property type="match status" value="1"/>
</dbReference>
<dbReference type="PANTHER" id="PTHR19836">
    <property type="entry name" value="30S RIBOSOMAL PROTEIN S14"/>
    <property type="match status" value="1"/>
</dbReference>
<dbReference type="PANTHER" id="PTHR19836:SF19">
    <property type="entry name" value="SMALL RIBOSOMAL SUBUNIT PROTEIN US14M"/>
    <property type="match status" value="1"/>
</dbReference>
<dbReference type="Pfam" id="PF00253">
    <property type="entry name" value="Ribosomal_S14"/>
    <property type="match status" value="1"/>
</dbReference>
<dbReference type="SUPFAM" id="SSF57716">
    <property type="entry name" value="Glucocorticoid receptor-like (DNA-binding domain)"/>
    <property type="match status" value="1"/>
</dbReference>
<dbReference type="PROSITE" id="PS00527">
    <property type="entry name" value="RIBOSOMAL_S14"/>
    <property type="match status" value="1"/>
</dbReference>